<keyword id="KW-0238">DNA-binding</keyword>
<keyword id="KW-1185">Reference proteome</keyword>
<keyword id="KW-0804">Transcription</keyword>
<keyword id="KW-0805">Transcription regulation</keyword>
<evidence type="ECO:0000255" key="1">
    <source>
        <dbReference type="PROSITE-ProRule" id="PRU00253"/>
    </source>
</evidence>
<evidence type="ECO:0000305" key="2"/>
<feature type="chain" id="PRO_0000427314" description="Uncharacterized HTH-type transcriptional regulator MT2340">
    <location>
        <begin position="1"/>
        <end position="312"/>
    </location>
</feature>
<feature type="domain" description="HTH lysR-type" evidence="1">
    <location>
        <begin position="8"/>
        <end position="65"/>
    </location>
</feature>
<feature type="DNA-binding region" description="H-T-H motif" evidence="1">
    <location>
        <begin position="25"/>
        <end position="45"/>
    </location>
</feature>
<accession>P9WMF2</accession>
<accession>L0T957</accession>
<accession>P67667</accession>
<accession>Q50683</accession>
<gene>
    <name type="ordered locus">MT2340</name>
</gene>
<organism>
    <name type="scientific">Mycobacterium tuberculosis (strain CDC 1551 / Oshkosh)</name>
    <dbReference type="NCBI Taxonomy" id="83331"/>
    <lineage>
        <taxon>Bacteria</taxon>
        <taxon>Bacillati</taxon>
        <taxon>Actinomycetota</taxon>
        <taxon>Actinomycetes</taxon>
        <taxon>Mycobacteriales</taxon>
        <taxon>Mycobacteriaceae</taxon>
        <taxon>Mycobacterium</taxon>
        <taxon>Mycobacterium tuberculosis complex</taxon>
    </lineage>
</organism>
<proteinExistence type="inferred from homology"/>
<comment type="similarity">
    <text evidence="2">Belongs to the LysR transcriptional regulatory family.</text>
</comment>
<name>Y2282_MYCTO</name>
<dbReference type="EMBL" id="AE000516">
    <property type="protein sequence ID" value="AAK46624.1"/>
    <property type="molecule type" value="Genomic_DNA"/>
</dbReference>
<dbReference type="PIR" id="F70731">
    <property type="entry name" value="F70731"/>
</dbReference>
<dbReference type="RefSeq" id="WP_003411696.1">
    <property type="nucleotide sequence ID" value="NZ_KK341227.1"/>
</dbReference>
<dbReference type="SMR" id="P9WMF2"/>
<dbReference type="KEGG" id="mtc:MT2340"/>
<dbReference type="PATRIC" id="fig|83331.31.peg.2518"/>
<dbReference type="HOGENOM" id="CLU_039613_6_1_11"/>
<dbReference type="Proteomes" id="UP000001020">
    <property type="component" value="Chromosome"/>
</dbReference>
<dbReference type="GO" id="GO:0003700">
    <property type="term" value="F:DNA-binding transcription factor activity"/>
    <property type="evidence" value="ECO:0007669"/>
    <property type="project" value="InterPro"/>
</dbReference>
<dbReference type="GO" id="GO:0000976">
    <property type="term" value="F:transcription cis-regulatory region binding"/>
    <property type="evidence" value="ECO:0007669"/>
    <property type="project" value="TreeGrafter"/>
</dbReference>
<dbReference type="Gene3D" id="3.40.190.10">
    <property type="entry name" value="Periplasmic binding protein-like II"/>
    <property type="match status" value="2"/>
</dbReference>
<dbReference type="Gene3D" id="1.10.10.10">
    <property type="entry name" value="Winged helix-like DNA-binding domain superfamily/Winged helix DNA-binding domain"/>
    <property type="match status" value="1"/>
</dbReference>
<dbReference type="InterPro" id="IPR005119">
    <property type="entry name" value="LysR_subst-bd"/>
</dbReference>
<dbReference type="InterPro" id="IPR000847">
    <property type="entry name" value="Tscrpt_reg_HTH_LysR"/>
</dbReference>
<dbReference type="InterPro" id="IPR036388">
    <property type="entry name" value="WH-like_DNA-bd_sf"/>
</dbReference>
<dbReference type="InterPro" id="IPR036390">
    <property type="entry name" value="WH_DNA-bd_sf"/>
</dbReference>
<dbReference type="PANTHER" id="PTHR30126">
    <property type="entry name" value="HTH-TYPE TRANSCRIPTIONAL REGULATOR"/>
    <property type="match status" value="1"/>
</dbReference>
<dbReference type="PANTHER" id="PTHR30126:SF39">
    <property type="entry name" value="HTH-TYPE TRANSCRIPTIONAL REGULATOR CYSL"/>
    <property type="match status" value="1"/>
</dbReference>
<dbReference type="Pfam" id="PF00126">
    <property type="entry name" value="HTH_1"/>
    <property type="match status" value="1"/>
</dbReference>
<dbReference type="Pfam" id="PF03466">
    <property type="entry name" value="LysR_substrate"/>
    <property type="match status" value="1"/>
</dbReference>
<dbReference type="SUPFAM" id="SSF53850">
    <property type="entry name" value="Periplasmic binding protein-like II"/>
    <property type="match status" value="1"/>
</dbReference>
<dbReference type="SUPFAM" id="SSF46785">
    <property type="entry name" value="Winged helix' DNA-binding domain"/>
    <property type="match status" value="1"/>
</dbReference>
<dbReference type="PROSITE" id="PS50931">
    <property type="entry name" value="HTH_LYSR"/>
    <property type="match status" value="1"/>
</dbReference>
<sequence length="312" mass="32989">MPLSSRMPGLTCFEIFLAIAEAGSLGGAARELGLTQQAVSRRLASMEAQIGVRLAIRTTRGSQLTPAGIVVAEWAARLLEVADEIDAGLGSLRTEGRQRIRVVASQTIAEQLMPHWMLSLRAADMRRGGTVPEVILTATNSEHAIAAVRDGIADLGFIENPCPPTGLGSVVVARDELVVVVPPGHKWARRSRVVSARELAQTPLVTREPNSGIRDSLTAALRDTLGEDMQQAPPVLELSSAAAVRAAVLAGAGPAAMSRLAIADDLAFGRLLAVDIPALNLRRQLRAIWVGGRTPPAGAIRDLLSHITSRST</sequence>
<reference key="1">
    <citation type="journal article" date="2002" name="J. Bacteriol.">
        <title>Whole-genome comparison of Mycobacterium tuberculosis clinical and laboratory strains.</title>
        <authorList>
            <person name="Fleischmann R.D."/>
            <person name="Alland D."/>
            <person name="Eisen J.A."/>
            <person name="Carpenter L."/>
            <person name="White O."/>
            <person name="Peterson J.D."/>
            <person name="DeBoy R.T."/>
            <person name="Dodson R.J."/>
            <person name="Gwinn M.L."/>
            <person name="Haft D.H."/>
            <person name="Hickey E.K."/>
            <person name="Kolonay J.F."/>
            <person name="Nelson W.C."/>
            <person name="Umayam L.A."/>
            <person name="Ermolaeva M.D."/>
            <person name="Salzberg S.L."/>
            <person name="Delcher A."/>
            <person name="Utterback T.R."/>
            <person name="Weidman J.F."/>
            <person name="Khouri H.M."/>
            <person name="Gill J."/>
            <person name="Mikula A."/>
            <person name="Bishai W."/>
            <person name="Jacobs W.R. Jr."/>
            <person name="Venter J.C."/>
            <person name="Fraser C.M."/>
        </authorList>
    </citation>
    <scope>NUCLEOTIDE SEQUENCE [LARGE SCALE GENOMIC DNA]</scope>
    <source>
        <strain>CDC 1551 / Oshkosh</strain>
    </source>
</reference>
<protein>
    <recommendedName>
        <fullName>Uncharacterized HTH-type transcriptional regulator MT2340</fullName>
    </recommendedName>
</protein>